<keyword id="KW-0143">Chaperone</keyword>
<keyword id="KW-0963">Cytoplasm</keyword>
<keyword id="KW-0996">Nickel insertion</keyword>
<evidence type="ECO:0000255" key="1">
    <source>
        <dbReference type="HAMAP-Rule" id="MF_01384"/>
    </source>
</evidence>
<feature type="chain" id="PRO_0000340489" description="Urease accessory protein UreD">
    <location>
        <begin position="1"/>
        <end position="278"/>
    </location>
</feature>
<name>URED_PSEP1</name>
<gene>
    <name evidence="1" type="primary">ureD</name>
    <name type="ordered locus">Pput_2847</name>
</gene>
<proteinExistence type="inferred from homology"/>
<organism>
    <name type="scientific">Pseudomonas putida (strain ATCC 700007 / DSM 6899 / JCM 31910 / BCRC 17059 / LMG 24140 / F1)</name>
    <dbReference type="NCBI Taxonomy" id="351746"/>
    <lineage>
        <taxon>Bacteria</taxon>
        <taxon>Pseudomonadati</taxon>
        <taxon>Pseudomonadota</taxon>
        <taxon>Gammaproteobacteria</taxon>
        <taxon>Pseudomonadales</taxon>
        <taxon>Pseudomonadaceae</taxon>
        <taxon>Pseudomonas</taxon>
    </lineage>
</organism>
<accession>A5W4B9</accession>
<comment type="function">
    <text evidence="1">Required for maturation of urease via the functional incorporation of the urease nickel metallocenter.</text>
</comment>
<comment type="subunit">
    <text evidence="1">UreD, UreF and UreG form a complex that acts as a GTP-hydrolysis-dependent molecular chaperone, activating the urease apoprotein by helping to assemble the nickel containing metallocenter of UreC. The UreE protein probably delivers the nickel.</text>
</comment>
<comment type="subcellular location">
    <subcellularLocation>
        <location evidence="1">Cytoplasm</location>
    </subcellularLocation>
</comment>
<comment type="similarity">
    <text evidence="1">Belongs to the UreD family.</text>
</comment>
<dbReference type="EMBL" id="CP000712">
    <property type="protein sequence ID" value="ABQ78979.1"/>
    <property type="molecule type" value="Genomic_DNA"/>
</dbReference>
<dbReference type="SMR" id="A5W4B9"/>
<dbReference type="KEGG" id="ppf:Pput_2847"/>
<dbReference type="eggNOG" id="COG0829">
    <property type="taxonomic scope" value="Bacteria"/>
</dbReference>
<dbReference type="HOGENOM" id="CLU_056339_0_0_6"/>
<dbReference type="GO" id="GO:0005737">
    <property type="term" value="C:cytoplasm"/>
    <property type="evidence" value="ECO:0007669"/>
    <property type="project" value="UniProtKB-SubCell"/>
</dbReference>
<dbReference type="GO" id="GO:0016151">
    <property type="term" value="F:nickel cation binding"/>
    <property type="evidence" value="ECO:0007669"/>
    <property type="project" value="UniProtKB-UniRule"/>
</dbReference>
<dbReference type="HAMAP" id="MF_01384">
    <property type="entry name" value="UreD"/>
    <property type="match status" value="1"/>
</dbReference>
<dbReference type="InterPro" id="IPR002669">
    <property type="entry name" value="UreD"/>
</dbReference>
<dbReference type="PANTHER" id="PTHR33643">
    <property type="entry name" value="UREASE ACCESSORY PROTEIN D"/>
    <property type="match status" value="1"/>
</dbReference>
<dbReference type="PANTHER" id="PTHR33643:SF1">
    <property type="entry name" value="UREASE ACCESSORY PROTEIN D"/>
    <property type="match status" value="1"/>
</dbReference>
<dbReference type="Pfam" id="PF01774">
    <property type="entry name" value="UreD"/>
    <property type="match status" value="1"/>
</dbReference>
<protein>
    <recommendedName>
        <fullName evidence="1">Urease accessory protein UreD</fullName>
    </recommendedName>
</protein>
<sequence>MMSLAEQIEQQQDDAGWSAHLQLRFVQRDGVTRLGAWKHFGPLLVQRPFYPEGAPCHVYVLHPPGGIVAGDRLELDIHLEPGSHALLTMPGASKFYRSIGPTARLTQRFHMATGSTLEWLPQDSIFFSGARASLASRFTLEPGARLLAWETLCLGRPVMHERFDHGALDSLLHIELPDEVGLHERLRLAGGHLGKLGGHPLLATFCAAPADQAVLEQVRPLLDELGNPAGATLLGSLLVIRVLDHDNQHLQRTLQRLWHVLRPAILGLPACPPRIWAT</sequence>
<reference key="1">
    <citation type="submission" date="2007-05" db="EMBL/GenBank/DDBJ databases">
        <title>Complete sequence of Pseudomonas putida F1.</title>
        <authorList>
            <consortium name="US DOE Joint Genome Institute"/>
            <person name="Copeland A."/>
            <person name="Lucas S."/>
            <person name="Lapidus A."/>
            <person name="Barry K."/>
            <person name="Detter J.C."/>
            <person name="Glavina del Rio T."/>
            <person name="Hammon N."/>
            <person name="Israni S."/>
            <person name="Dalin E."/>
            <person name="Tice H."/>
            <person name="Pitluck S."/>
            <person name="Chain P."/>
            <person name="Malfatti S."/>
            <person name="Shin M."/>
            <person name="Vergez L."/>
            <person name="Schmutz J."/>
            <person name="Larimer F."/>
            <person name="Land M."/>
            <person name="Hauser L."/>
            <person name="Kyrpides N."/>
            <person name="Lykidis A."/>
            <person name="Parales R."/>
            <person name="Richardson P."/>
        </authorList>
    </citation>
    <scope>NUCLEOTIDE SEQUENCE [LARGE SCALE GENOMIC DNA]</scope>
    <source>
        <strain>ATCC 700007 / DSM 6899 / JCM 31910 / BCRC 17059 / LMG 24140 / F1</strain>
    </source>
</reference>